<evidence type="ECO:0000250" key="1"/>
<evidence type="ECO:0000305" key="2"/>
<protein>
    <recommendedName>
        <fullName>Trafficking protein particle complex subunit 3-like protein</fullName>
        <shortName>TRAPPC3-like protein</shortName>
    </recommendedName>
    <alternativeName>
        <fullName>BET3-like protein</fullName>
    </alternativeName>
</protein>
<dbReference type="EMBL" id="BC099502">
    <property type="protein sequence ID" value="AAH99502.1"/>
    <property type="molecule type" value="mRNA"/>
</dbReference>
<dbReference type="CCDS" id="CCDS48535.1"/>
<dbReference type="RefSeq" id="NP_001156409.1">
    <property type="nucleotide sequence ID" value="NM_001162937.1"/>
</dbReference>
<dbReference type="SMR" id="Q4KL14"/>
<dbReference type="FunCoup" id="Q4KL14">
    <property type="interactions" value="112"/>
</dbReference>
<dbReference type="STRING" id="10090.ENSMUSP00000093432"/>
<dbReference type="PhosphoSitePlus" id="Q4KL14"/>
<dbReference type="PaxDb" id="10090-ENSMUSP00000093432"/>
<dbReference type="Antibodypedia" id="55239">
    <property type="antibodies" value="2 antibodies from 2 providers"/>
</dbReference>
<dbReference type="Ensembl" id="ENSMUST00000095758.3">
    <property type="protein sequence ID" value="ENSMUSP00000093432.2"/>
    <property type="gene ID" value="ENSMUSG00000071340.3"/>
</dbReference>
<dbReference type="GeneID" id="692132"/>
<dbReference type="KEGG" id="mmu:692132"/>
<dbReference type="UCSC" id="uc007euo.1">
    <property type="organism name" value="mouse"/>
</dbReference>
<dbReference type="AGR" id="MGI:3642034"/>
<dbReference type="CTD" id="100128327"/>
<dbReference type="MGI" id="MGI:3642034">
    <property type="gene designation" value="Trappc3l"/>
</dbReference>
<dbReference type="VEuPathDB" id="HostDB:ENSMUSG00000071340"/>
<dbReference type="eggNOG" id="KOG3330">
    <property type="taxonomic scope" value="Eukaryota"/>
</dbReference>
<dbReference type="GeneTree" id="ENSGT00390000003880"/>
<dbReference type="HOGENOM" id="CLU_087110_0_1_1"/>
<dbReference type="InParanoid" id="Q4KL14"/>
<dbReference type="OMA" id="QRRPEYH"/>
<dbReference type="OrthoDB" id="10262857at2759"/>
<dbReference type="PhylomeDB" id="Q4KL14"/>
<dbReference type="TreeFam" id="TF300091"/>
<dbReference type="BioGRID-ORCS" id="692132">
    <property type="hits" value="1 hit in 79 CRISPR screens"/>
</dbReference>
<dbReference type="ChiTaRS" id="Trappc3l">
    <property type="organism name" value="mouse"/>
</dbReference>
<dbReference type="PRO" id="PR:Q4KL14"/>
<dbReference type="Proteomes" id="UP000000589">
    <property type="component" value="Chromosome 10"/>
</dbReference>
<dbReference type="RNAct" id="Q4KL14">
    <property type="molecule type" value="protein"/>
</dbReference>
<dbReference type="Bgee" id="ENSMUSG00000071340">
    <property type="expression patterns" value="Expressed in primary oocyte and 7 other cell types or tissues"/>
</dbReference>
<dbReference type="ExpressionAtlas" id="Q4KL14">
    <property type="expression patterns" value="baseline and differential"/>
</dbReference>
<dbReference type="GO" id="GO:0005783">
    <property type="term" value="C:endoplasmic reticulum"/>
    <property type="evidence" value="ECO:0007669"/>
    <property type="project" value="UniProtKB-SubCell"/>
</dbReference>
<dbReference type="GO" id="GO:0005794">
    <property type="term" value="C:Golgi apparatus"/>
    <property type="evidence" value="ECO:0007669"/>
    <property type="project" value="UniProtKB-SubCell"/>
</dbReference>
<dbReference type="GO" id="GO:0030008">
    <property type="term" value="C:TRAPP complex"/>
    <property type="evidence" value="ECO:0007669"/>
    <property type="project" value="Ensembl"/>
</dbReference>
<dbReference type="GO" id="GO:0048193">
    <property type="term" value="P:Golgi vesicle transport"/>
    <property type="evidence" value="ECO:0007669"/>
    <property type="project" value="InterPro"/>
</dbReference>
<dbReference type="CDD" id="cd14942">
    <property type="entry name" value="TRAPPC3_bet3"/>
    <property type="match status" value="1"/>
</dbReference>
<dbReference type="FunFam" id="3.30.1380.20:FF:000010">
    <property type="entry name" value="Trafficking protein particle complex subunit"/>
    <property type="match status" value="1"/>
</dbReference>
<dbReference type="Gene3D" id="3.30.1380.20">
    <property type="entry name" value="Trafficking protein particle complex subunit 3"/>
    <property type="match status" value="1"/>
</dbReference>
<dbReference type="InterPro" id="IPR016721">
    <property type="entry name" value="Bet3"/>
</dbReference>
<dbReference type="InterPro" id="IPR024096">
    <property type="entry name" value="NO_sig/Golgi_transp_ligand-bd"/>
</dbReference>
<dbReference type="InterPro" id="IPR007194">
    <property type="entry name" value="TRAPP_component"/>
</dbReference>
<dbReference type="PANTHER" id="PTHR13048">
    <property type="entry name" value="TRAFFICKING PROTEIN PARTICLE COMPLEX SUBUNIT 3"/>
    <property type="match status" value="1"/>
</dbReference>
<dbReference type="Pfam" id="PF04051">
    <property type="entry name" value="TRAPP"/>
    <property type="match status" value="1"/>
</dbReference>
<dbReference type="PIRSF" id="PIRSF018293">
    <property type="entry name" value="TRAPP_I_complex_Bet3"/>
    <property type="match status" value="1"/>
</dbReference>
<dbReference type="SUPFAM" id="SSF111126">
    <property type="entry name" value="Ligand-binding domain in the NO signalling and Golgi transport"/>
    <property type="match status" value="1"/>
</dbReference>
<feature type="chain" id="PRO_0000305084" description="Trafficking protein particle complex subunit 3-like protein">
    <location>
        <begin position="1"/>
        <end position="181"/>
    </location>
</feature>
<feature type="lipid moiety-binding region" description="S-palmitoyl cysteine" evidence="1">
    <location>
        <position position="68"/>
    </location>
</feature>
<reference key="1">
    <citation type="journal article" date="2004" name="Genome Res.">
        <title>The status, quality, and expansion of the NIH full-length cDNA project: the Mammalian Gene Collection (MGC).</title>
        <authorList>
            <consortium name="The MGC Project Team"/>
        </authorList>
    </citation>
    <scope>NUCLEOTIDE SEQUENCE [LARGE SCALE MRNA]</scope>
    <source>
        <tissue>Oocyte</tissue>
    </source>
</reference>
<sequence length="181" mass="20763">MSRPAHKRPEYHKINKDLFVLTYGALVAQLCKDYEKDEDVNKYLDKMGYNIGTRLVEDFLARSCVRRCHSYSEIINIIAQVAFKMYLGITPSVTCHNSSRNEFSLILHKNPLAEFVEELPAGRSALCYCNLLCGIIRGALEMVHLAANVTFLQDRLKGDSVTEIGITFLKKLDEKKYRRKK</sequence>
<accession>Q4KL14</accession>
<comment type="function">
    <text evidence="1">May play a role in vesicular transport from endoplasmic reticulum to Golgi.</text>
</comment>
<comment type="subunit">
    <text evidence="1">Homodimer. Component of the multisubunit TRAPP (transport protein particle) complex, which includes at least TRAPPC2, TRAPPC2L, TRAPPC3, TRAPPC3L, TRAPPC4, TRAPPC5, TRAPPC8, TRAPPC9, TRAPPC10, TRAPPC11 and TRAPPC12 (By similarity).</text>
</comment>
<comment type="subcellular location">
    <subcellularLocation>
        <location evidence="1">Golgi apparatus</location>
        <location evidence="1">cis-Golgi network</location>
    </subcellularLocation>
    <subcellularLocation>
        <location evidence="1">Endoplasmic reticulum</location>
    </subcellularLocation>
</comment>
<comment type="similarity">
    <text evidence="2">Belongs to the TRAPP small subunits family. BET3 subfamily.</text>
</comment>
<proteinExistence type="evidence at transcript level"/>
<gene>
    <name type="primary">Trappc3l</name>
    <name type="synonym">Bet3l</name>
</gene>
<name>TPC3L_MOUSE</name>
<organism>
    <name type="scientific">Mus musculus</name>
    <name type="common">Mouse</name>
    <dbReference type="NCBI Taxonomy" id="10090"/>
    <lineage>
        <taxon>Eukaryota</taxon>
        <taxon>Metazoa</taxon>
        <taxon>Chordata</taxon>
        <taxon>Craniata</taxon>
        <taxon>Vertebrata</taxon>
        <taxon>Euteleostomi</taxon>
        <taxon>Mammalia</taxon>
        <taxon>Eutheria</taxon>
        <taxon>Euarchontoglires</taxon>
        <taxon>Glires</taxon>
        <taxon>Rodentia</taxon>
        <taxon>Myomorpha</taxon>
        <taxon>Muroidea</taxon>
        <taxon>Muridae</taxon>
        <taxon>Murinae</taxon>
        <taxon>Mus</taxon>
        <taxon>Mus</taxon>
    </lineage>
</organism>
<keyword id="KW-0256">Endoplasmic reticulum</keyword>
<keyword id="KW-0931">ER-Golgi transport</keyword>
<keyword id="KW-0333">Golgi apparatus</keyword>
<keyword id="KW-0449">Lipoprotein</keyword>
<keyword id="KW-0564">Palmitate</keyword>
<keyword id="KW-1185">Reference proteome</keyword>
<keyword id="KW-0813">Transport</keyword>